<accession>Q8D235</accession>
<protein>
    <recommendedName>
        <fullName evidence="2">Large ribosomal subunit protein uL10</fullName>
    </recommendedName>
    <alternativeName>
        <fullName>50S ribosomal protein L10</fullName>
    </alternativeName>
</protein>
<evidence type="ECO:0000250" key="1"/>
<evidence type="ECO:0000305" key="2"/>
<reference key="1">
    <citation type="journal article" date="2002" name="Nat. Genet.">
        <title>Genome sequence of the endocellular obligate symbiont of tsetse flies, Wigglesworthia glossinidia.</title>
        <authorList>
            <person name="Akman L."/>
            <person name="Yamashita A."/>
            <person name="Watanabe H."/>
            <person name="Oshima K."/>
            <person name="Shiba T."/>
            <person name="Hattori M."/>
            <person name="Aksoy S."/>
        </authorList>
    </citation>
    <scope>NUCLEOTIDE SEQUENCE [LARGE SCALE GENOMIC DNA]</scope>
</reference>
<organism>
    <name type="scientific">Wigglesworthia glossinidia brevipalpis</name>
    <dbReference type="NCBI Taxonomy" id="36870"/>
    <lineage>
        <taxon>Bacteria</taxon>
        <taxon>Pseudomonadati</taxon>
        <taxon>Pseudomonadota</taxon>
        <taxon>Gammaproteobacteria</taxon>
        <taxon>Enterobacterales</taxon>
        <taxon>Erwiniaceae</taxon>
        <taxon>Wigglesworthia</taxon>
    </lineage>
</organism>
<sequence>MLNRKNKENIISKINKITKSSLSILIVDPTGITSNQMNNLRKSSRKLNVNIKQVRNTLMRFAIVDTEFDCLEKYIKGSNLIAFSHSHPGSAARIFKNFTKENNKIKIKLAVFERKIITDSNIDYLANLPTHEESVINFINIIQEASIKKLIRILILINNNK</sequence>
<proteinExistence type="inferred from homology"/>
<keyword id="KW-1185">Reference proteome</keyword>
<keyword id="KW-0687">Ribonucleoprotein</keyword>
<keyword id="KW-0689">Ribosomal protein</keyword>
<keyword id="KW-0694">RNA-binding</keyword>
<keyword id="KW-0699">rRNA-binding</keyword>
<gene>
    <name type="primary">rplJ</name>
    <name type="ordered locus">WIGBR5200</name>
</gene>
<feature type="chain" id="PRO_0000154747" description="Large ribosomal subunit protein uL10">
    <location>
        <begin position="1"/>
        <end position="161"/>
    </location>
</feature>
<comment type="function">
    <text evidence="1">Forms part of the ribosomal stalk, playing a central role in the interaction of the ribosome with GTP-bound translation factors.</text>
</comment>
<comment type="subunit">
    <text evidence="1">Part of the ribosomal stalk of the 50S ribosomal subunit. The N-terminus interacts with L11 and the large rRNA to form the base of the stalk. The C-terminus forms an elongated spine to which L12 dimers bind in a sequential fashion forming a multimeric L10(L12)X complex (By similarity).</text>
</comment>
<comment type="similarity">
    <text evidence="2">Belongs to the universal ribosomal protein uL10 family.</text>
</comment>
<name>RL10_WIGBR</name>
<dbReference type="EMBL" id="BA000021">
    <property type="protein sequence ID" value="BAC24666.1"/>
    <property type="molecule type" value="Genomic_DNA"/>
</dbReference>
<dbReference type="SMR" id="Q8D235"/>
<dbReference type="STRING" id="36870.gene:10369028"/>
<dbReference type="KEGG" id="wbr:rplJ"/>
<dbReference type="eggNOG" id="COG0244">
    <property type="taxonomic scope" value="Bacteria"/>
</dbReference>
<dbReference type="HOGENOM" id="CLU_092227_0_2_6"/>
<dbReference type="OrthoDB" id="9808307at2"/>
<dbReference type="Proteomes" id="UP000000562">
    <property type="component" value="Chromosome"/>
</dbReference>
<dbReference type="GO" id="GO:1990904">
    <property type="term" value="C:ribonucleoprotein complex"/>
    <property type="evidence" value="ECO:0007669"/>
    <property type="project" value="UniProtKB-KW"/>
</dbReference>
<dbReference type="GO" id="GO:0005840">
    <property type="term" value="C:ribosome"/>
    <property type="evidence" value="ECO:0007669"/>
    <property type="project" value="UniProtKB-KW"/>
</dbReference>
<dbReference type="GO" id="GO:0070180">
    <property type="term" value="F:large ribosomal subunit rRNA binding"/>
    <property type="evidence" value="ECO:0007669"/>
    <property type="project" value="UniProtKB-UniRule"/>
</dbReference>
<dbReference type="GO" id="GO:0006412">
    <property type="term" value="P:translation"/>
    <property type="evidence" value="ECO:0007669"/>
    <property type="project" value="UniProtKB-UniRule"/>
</dbReference>
<dbReference type="CDD" id="cd05797">
    <property type="entry name" value="Ribosomal_L10"/>
    <property type="match status" value="1"/>
</dbReference>
<dbReference type="Gene3D" id="3.30.70.1730">
    <property type="match status" value="1"/>
</dbReference>
<dbReference type="HAMAP" id="MF_00362">
    <property type="entry name" value="Ribosomal_uL10"/>
    <property type="match status" value="1"/>
</dbReference>
<dbReference type="InterPro" id="IPR001790">
    <property type="entry name" value="Ribosomal_uL10"/>
</dbReference>
<dbReference type="InterPro" id="IPR043141">
    <property type="entry name" value="Ribosomal_uL10-like_sf"/>
</dbReference>
<dbReference type="InterPro" id="IPR022973">
    <property type="entry name" value="Ribosomal_uL10_bac"/>
</dbReference>
<dbReference type="InterPro" id="IPR047865">
    <property type="entry name" value="Ribosomal_uL10_bac_type"/>
</dbReference>
<dbReference type="NCBIfam" id="NF000955">
    <property type="entry name" value="PRK00099.1-1"/>
    <property type="match status" value="1"/>
</dbReference>
<dbReference type="PANTHER" id="PTHR11560">
    <property type="entry name" value="39S RIBOSOMAL PROTEIN L10, MITOCHONDRIAL"/>
    <property type="match status" value="1"/>
</dbReference>
<dbReference type="Pfam" id="PF00466">
    <property type="entry name" value="Ribosomal_L10"/>
    <property type="match status" value="1"/>
</dbReference>
<dbReference type="SUPFAM" id="SSF160369">
    <property type="entry name" value="Ribosomal protein L10-like"/>
    <property type="match status" value="1"/>
</dbReference>